<reference key="1">
    <citation type="journal article" date="1998" name="Plant J.">
        <title>Towards functional characterisation of the members of the R2R3-MYB gene family from Arabidopsis thaliana.</title>
        <authorList>
            <person name="Kranz H.D."/>
            <person name="Denekamp M."/>
            <person name="Greco R."/>
            <person name="Jin H.-L."/>
            <person name="Leyva A."/>
            <person name="Meissner R.C."/>
            <person name="Petroni K."/>
            <person name="Urzainqui A."/>
            <person name="Bevan M."/>
            <person name="Martin C."/>
            <person name="Smeekens S."/>
            <person name="Tonelli C."/>
            <person name="Paz-Ares J."/>
            <person name="Weisshaar B."/>
        </authorList>
    </citation>
    <scope>NUCLEOTIDE SEQUENCE [MRNA] (ISOFORM MYB59-3)</scope>
    <source>
        <strain>cv. Columbia</strain>
    </source>
</reference>
<reference key="2">
    <citation type="journal article" date="2006" name="J. Exp. Bot.">
        <title>A subgroup of MYB transcription factor genes undergoes highly conserved alternative splicing in Arabidopsis and rice.</title>
        <authorList>
            <person name="Li J."/>
            <person name="Li X."/>
            <person name="Guo L."/>
            <person name="Lu F."/>
            <person name="Feng X."/>
            <person name="He K."/>
            <person name="Wei L."/>
            <person name="Chen Z."/>
            <person name="Qu L.-J."/>
            <person name="Gu H."/>
        </authorList>
    </citation>
    <scope>NUCLEOTIDE SEQUENCE [MRNA] (ISOFORMS MYB59-1; MYB59-2; MYB59-3 AND MYB59-4)</scope>
    <scope>TISSUE SPECIFICITY</scope>
    <scope>INDUCTION</scope>
    <scope>SUBCELLULAR LOCATION</scope>
    <scope>ALTERNATIVE SPLICING</scope>
    <source>
        <strain>cv. Columbia</strain>
    </source>
</reference>
<reference key="3">
    <citation type="journal article" date="1997" name="DNA Res.">
        <title>Structural analysis of Arabidopsis thaliana chromosome 5. II. Sequence features of the regions of 1,044,062 bp covered by thirteen physically assigned P1 clones.</title>
        <authorList>
            <person name="Kotani H."/>
            <person name="Nakamura Y."/>
            <person name="Sato S."/>
            <person name="Kaneko T."/>
            <person name="Asamizu E."/>
            <person name="Miyajima N."/>
            <person name="Tabata S."/>
        </authorList>
    </citation>
    <scope>NUCLEOTIDE SEQUENCE [LARGE SCALE GENOMIC DNA]</scope>
    <source>
        <strain>cv. Columbia</strain>
    </source>
</reference>
<reference key="4">
    <citation type="journal article" date="2017" name="Plant J.">
        <title>Araport11: a complete reannotation of the Arabidopsis thaliana reference genome.</title>
        <authorList>
            <person name="Cheng C.Y."/>
            <person name="Krishnakumar V."/>
            <person name="Chan A.P."/>
            <person name="Thibaud-Nissen F."/>
            <person name="Schobel S."/>
            <person name="Town C.D."/>
        </authorList>
    </citation>
    <scope>GENOME REANNOTATION</scope>
    <source>
        <strain>cv. Columbia</strain>
    </source>
</reference>
<reference key="5">
    <citation type="submission" date="2006-07" db="EMBL/GenBank/DDBJ databases">
        <title>Large-scale analysis of RIKEN Arabidopsis full-length (RAFL) cDNAs.</title>
        <authorList>
            <person name="Totoki Y."/>
            <person name="Seki M."/>
            <person name="Ishida J."/>
            <person name="Nakajima M."/>
            <person name="Enju A."/>
            <person name="Kamiya A."/>
            <person name="Narusaka M."/>
            <person name="Shin-i T."/>
            <person name="Nakagawa M."/>
            <person name="Sakamoto N."/>
            <person name="Oishi K."/>
            <person name="Kohara Y."/>
            <person name="Kobayashi M."/>
            <person name="Toyoda A."/>
            <person name="Sakaki Y."/>
            <person name="Sakurai T."/>
            <person name="Iida K."/>
            <person name="Akiyama K."/>
            <person name="Satou M."/>
            <person name="Toyoda T."/>
            <person name="Konagaya A."/>
            <person name="Carninci P."/>
            <person name="Kawai J."/>
            <person name="Hayashizaki Y."/>
            <person name="Shinozaki K."/>
        </authorList>
    </citation>
    <scope>NUCLEOTIDE SEQUENCE [LARGE SCALE MRNA] (ISOFORM MYB59-1)</scope>
    <source>
        <strain>cv. Columbia</strain>
    </source>
</reference>
<reference key="6">
    <citation type="journal article" date="1998" name="Plant J.">
        <title>More than 80 R2R3-MYB regulatory genes in the genome of Arabidopsis thaliana.</title>
        <authorList>
            <person name="Romero I."/>
            <person name="Fuertes A."/>
            <person name="Benito M.J."/>
            <person name="Malpica J.M."/>
            <person name="Leyva A."/>
            <person name="Paz-Ares J."/>
        </authorList>
    </citation>
    <scope>NUCLEOTIDE SEQUENCE [MRNA] OF 51-95 (ISOFORMS MYB59-2/MYB59-3)</scope>
    <source>
        <strain>cv. Landsberg erecta</strain>
    </source>
</reference>
<reference key="7">
    <citation type="journal article" date="2001" name="Curr. Opin. Plant Biol.">
        <title>The R2R3-MYB gene family in Arabidopsis thaliana.</title>
        <authorList>
            <person name="Stracke R."/>
            <person name="Werber M."/>
            <person name="Weisshaar B."/>
        </authorList>
    </citation>
    <scope>GENE FAMILY</scope>
    <scope>NOMENCLATURE</scope>
</reference>
<reference key="8">
    <citation type="journal article" date="2006" name="Plant Mol. Biol.">
        <title>The MYB transcription factor superfamily of Arabidopsis: expression analysis and phylogenetic comparison with the rice MYB family.</title>
        <authorList>
            <person name="Chen Y."/>
            <person name="Yang X."/>
            <person name="He K."/>
            <person name="Liu M."/>
            <person name="Li J."/>
            <person name="Gao Z."/>
            <person name="Lin Z."/>
            <person name="Zhang Y."/>
            <person name="Wang X."/>
            <person name="Qiu X."/>
            <person name="Shen Y."/>
            <person name="Zhang L."/>
            <person name="Deng X."/>
            <person name="Luo J."/>
            <person name="Deng X.-W."/>
            <person name="Chen Z."/>
            <person name="Gu H."/>
            <person name="Qu L.-J."/>
        </authorList>
    </citation>
    <scope>INDUCTION BY SALICYLIC ACID AND CADMIUM</scope>
    <scope>GENE FAMILY</scope>
</reference>
<dbReference type="EMBL" id="AF062894">
    <property type="protein sequence ID" value="AAC83616.1"/>
    <property type="molecule type" value="mRNA"/>
</dbReference>
<dbReference type="EMBL" id="AY519641">
    <property type="protein sequence ID" value="AAS10111.1"/>
    <property type="molecule type" value="mRNA"/>
</dbReference>
<dbReference type="EMBL" id="DQ075252">
    <property type="protein sequence ID" value="AAY97894.1"/>
    <property type="molecule type" value="mRNA"/>
</dbReference>
<dbReference type="EMBL" id="DQ075253">
    <property type="protein sequence ID" value="AAY97895.1"/>
    <property type="molecule type" value="mRNA"/>
</dbReference>
<dbReference type="EMBL" id="DQ075254">
    <property type="protein sequence ID" value="AAY97896.1"/>
    <property type="molecule type" value="mRNA"/>
</dbReference>
<dbReference type="EMBL" id="AB006705">
    <property type="protein sequence ID" value="BAB09515.1"/>
    <property type="molecule type" value="Genomic_DNA"/>
</dbReference>
<dbReference type="EMBL" id="CP002688">
    <property type="protein sequence ID" value="AED97231.1"/>
    <property type="molecule type" value="Genomic_DNA"/>
</dbReference>
<dbReference type="EMBL" id="CP002688">
    <property type="protein sequence ID" value="AED97232.1"/>
    <property type="molecule type" value="Genomic_DNA"/>
</dbReference>
<dbReference type="EMBL" id="CP002688">
    <property type="protein sequence ID" value="AED97233.1"/>
    <property type="molecule type" value="Genomic_DNA"/>
</dbReference>
<dbReference type="EMBL" id="AK229048">
    <property type="protein sequence ID" value="BAF00931.1"/>
    <property type="molecule type" value="mRNA"/>
</dbReference>
<dbReference type="EMBL" id="Z95781">
    <property type="protein sequence ID" value="CAB09213.1"/>
    <property type="molecule type" value="mRNA"/>
</dbReference>
<dbReference type="EMBL" id="Z95772">
    <property type="protein sequence ID" value="CAB09204.1"/>
    <property type="molecule type" value="mRNA"/>
</dbReference>
<dbReference type="PIR" id="T51666">
    <property type="entry name" value="T51666"/>
</dbReference>
<dbReference type="RefSeq" id="NP_200786.1">
    <molecule id="Q4JL84-1"/>
    <property type="nucleotide sequence ID" value="NM_125370.4"/>
</dbReference>
<dbReference type="RefSeq" id="NP_851225.1">
    <molecule id="Q4JL84-2"/>
    <property type="nucleotide sequence ID" value="NM_180894.4"/>
</dbReference>
<dbReference type="RefSeq" id="NP_851226.1">
    <molecule id="Q4JL84-3"/>
    <property type="nucleotide sequence ID" value="NM_180895.3"/>
</dbReference>
<dbReference type="SMR" id="Q4JL84"/>
<dbReference type="FunCoup" id="Q4JL84">
    <property type="interactions" value="60"/>
</dbReference>
<dbReference type="STRING" id="3702.Q4JL84"/>
<dbReference type="iPTMnet" id="Q4JL84"/>
<dbReference type="PaxDb" id="3702-AT5G59780.3"/>
<dbReference type="EnsemblPlants" id="AT5G59780.1">
    <molecule id="Q4JL84-2"/>
    <property type="protein sequence ID" value="AT5G59780.1"/>
    <property type="gene ID" value="AT5G59780"/>
</dbReference>
<dbReference type="EnsemblPlants" id="AT5G59780.2">
    <molecule id="Q4JL84-3"/>
    <property type="protein sequence ID" value="AT5G59780.2"/>
    <property type="gene ID" value="AT5G59780"/>
</dbReference>
<dbReference type="EnsemblPlants" id="AT5G59780.3">
    <molecule id="Q4JL84-1"/>
    <property type="protein sequence ID" value="AT5G59780.3"/>
    <property type="gene ID" value="AT5G59780"/>
</dbReference>
<dbReference type="GeneID" id="836099"/>
<dbReference type="Gramene" id="AT5G59780.1">
    <molecule id="Q4JL84-2"/>
    <property type="protein sequence ID" value="AT5G59780.1"/>
    <property type="gene ID" value="AT5G59780"/>
</dbReference>
<dbReference type="Gramene" id="AT5G59780.2">
    <molecule id="Q4JL84-3"/>
    <property type="protein sequence ID" value="AT5G59780.2"/>
    <property type="gene ID" value="AT5G59780"/>
</dbReference>
<dbReference type="Gramene" id="AT5G59780.3">
    <molecule id="Q4JL84-1"/>
    <property type="protein sequence ID" value="AT5G59780.3"/>
    <property type="gene ID" value="AT5G59780"/>
</dbReference>
<dbReference type="KEGG" id="ath:AT5G59780"/>
<dbReference type="Araport" id="AT5G59780"/>
<dbReference type="TAIR" id="AT5G59780">
    <property type="gene designation" value="MYB59"/>
</dbReference>
<dbReference type="eggNOG" id="KOG0048">
    <property type="taxonomic scope" value="Eukaryota"/>
</dbReference>
<dbReference type="HOGENOM" id="CLU_028567_25_0_1"/>
<dbReference type="InParanoid" id="Q4JL84"/>
<dbReference type="OMA" id="LWKMDED"/>
<dbReference type="OrthoDB" id="2143914at2759"/>
<dbReference type="PhylomeDB" id="Q4JL84"/>
<dbReference type="PRO" id="PR:Q4JL84"/>
<dbReference type="Proteomes" id="UP000006548">
    <property type="component" value="Chromosome 5"/>
</dbReference>
<dbReference type="ExpressionAtlas" id="Q4JL84">
    <property type="expression patterns" value="baseline and differential"/>
</dbReference>
<dbReference type="GO" id="GO:0005634">
    <property type="term" value="C:nucleus"/>
    <property type="evidence" value="ECO:0000314"/>
    <property type="project" value="TAIR"/>
</dbReference>
<dbReference type="GO" id="GO:0003700">
    <property type="term" value="F:DNA-binding transcription factor activity"/>
    <property type="evidence" value="ECO:0000353"/>
    <property type="project" value="TAIR"/>
</dbReference>
<dbReference type="GO" id="GO:0043565">
    <property type="term" value="F:sequence-specific DNA binding"/>
    <property type="evidence" value="ECO:0000314"/>
    <property type="project" value="TAIR"/>
</dbReference>
<dbReference type="GO" id="GO:0000976">
    <property type="term" value="F:transcription cis-regulatory region binding"/>
    <property type="evidence" value="ECO:0000353"/>
    <property type="project" value="TAIR"/>
</dbReference>
<dbReference type="GO" id="GO:0035865">
    <property type="term" value="P:cellular response to potassium ion"/>
    <property type="evidence" value="ECO:0000315"/>
    <property type="project" value="TAIR"/>
</dbReference>
<dbReference type="GO" id="GO:0043266">
    <property type="term" value="P:regulation of potassium ion transport"/>
    <property type="evidence" value="ECO:0000315"/>
    <property type="project" value="TAIR"/>
</dbReference>
<dbReference type="CDD" id="cd00167">
    <property type="entry name" value="SANT"/>
    <property type="match status" value="2"/>
</dbReference>
<dbReference type="FunFam" id="1.10.10.60:FF:000259">
    <property type="entry name" value="MYB transcription factor"/>
    <property type="match status" value="1"/>
</dbReference>
<dbReference type="FunFam" id="1.10.10.60:FF:000011">
    <property type="entry name" value="Myb transcription factor"/>
    <property type="match status" value="1"/>
</dbReference>
<dbReference type="Gene3D" id="1.10.10.60">
    <property type="entry name" value="Homeodomain-like"/>
    <property type="match status" value="2"/>
</dbReference>
<dbReference type="InterPro" id="IPR044676">
    <property type="entry name" value="EOBI/EOBII-like_plant"/>
</dbReference>
<dbReference type="InterPro" id="IPR009057">
    <property type="entry name" value="Homeodomain-like_sf"/>
</dbReference>
<dbReference type="InterPro" id="IPR017930">
    <property type="entry name" value="Myb_dom"/>
</dbReference>
<dbReference type="InterPro" id="IPR001005">
    <property type="entry name" value="SANT/Myb"/>
</dbReference>
<dbReference type="PANTHER" id="PTHR45675">
    <property type="entry name" value="MYB TRANSCRIPTION FACTOR-RELATED-RELATED"/>
    <property type="match status" value="1"/>
</dbReference>
<dbReference type="PANTHER" id="PTHR45675:SF93">
    <property type="entry name" value="TRANSCRIPTION FACTOR MYB59"/>
    <property type="match status" value="1"/>
</dbReference>
<dbReference type="Pfam" id="PF00249">
    <property type="entry name" value="Myb_DNA-binding"/>
    <property type="match status" value="2"/>
</dbReference>
<dbReference type="SMART" id="SM00717">
    <property type="entry name" value="SANT"/>
    <property type="match status" value="2"/>
</dbReference>
<dbReference type="SUPFAM" id="SSF46689">
    <property type="entry name" value="Homeodomain-like"/>
    <property type="match status" value="1"/>
</dbReference>
<dbReference type="PROSITE" id="PS51294">
    <property type="entry name" value="HTH_MYB"/>
    <property type="match status" value="2"/>
</dbReference>
<gene>
    <name type="primary">MYB59</name>
    <name type="ordered locus">At5g59780</name>
    <name type="ORF">MTH12.19</name>
</gene>
<organism>
    <name type="scientific">Arabidopsis thaliana</name>
    <name type="common">Mouse-ear cress</name>
    <dbReference type="NCBI Taxonomy" id="3702"/>
    <lineage>
        <taxon>Eukaryota</taxon>
        <taxon>Viridiplantae</taxon>
        <taxon>Streptophyta</taxon>
        <taxon>Embryophyta</taxon>
        <taxon>Tracheophyta</taxon>
        <taxon>Spermatophyta</taxon>
        <taxon>Magnoliopsida</taxon>
        <taxon>eudicotyledons</taxon>
        <taxon>Gunneridae</taxon>
        <taxon>Pentapetalae</taxon>
        <taxon>rosids</taxon>
        <taxon>malvids</taxon>
        <taxon>Brassicales</taxon>
        <taxon>Brassicaceae</taxon>
        <taxon>Camelineae</taxon>
        <taxon>Arabidopsis</taxon>
    </lineage>
</organism>
<evidence type="ECO:0000255" key="1"/>
<evidence type="ECO:0000255" key="2">
    <source>
        <dbReference type="PROSITE-ProRule" id="PRU00625"/>
    </source>
</evidence>
<evidence type="ECO:0000256" key="3">
    <source>
        <dbReference type="SAM" id="MobiDB-lite"/>
    </source>
</evidence>
<evidence type="ECO:0000269" key="4">
    <source>
    </source>
</evidence>
<evidence type="ECO:0000269" key="5">
    <source>
    </source>
</evidence>
<evidence type="ECO:0000303" key="6">
    <source>
    </source>
</evidence>
<evidence type="ECO:0000303" key="7">
    <source ref="5"/>
</evidence>
<evidence type="ECO:0000305" key="8"/>
<feature type="chain" id="PRO_0000234359" description="Transcription factor MYB59">
    <location>
        <begin position="1"/>
        <end position="235"/>
    </location>
</feature>
<feature type="domain" description="HTH myb-type 1" evidence="2">
    <location>
        <begin position="5"/>
        <end position="57"/>
    </location>
</feature>
<feature type="domain" description="HTH myb-type 2" evidence="2">
    <location>
        <begin position="58"/>
        <end position="112"/>
    </location>
</feature>
<feature type="DNA-binding region" description="H-T-H motif" evidence="2">
    <location>
        <begin position="33"/>
        <end position="57"/>
    </location>
</feature>
<feature type="DNA-binding region" description="H-T-H motif" evidence="2">
    <location>
        <begin position="85"/>
        <end position="108"/>
    </location>
</feature>
<feature type="region of interest" description="Disordered" evidence="3">
    <location>
        <begin position="109"/>
        <end position="147"/>
    </location>
</feature>
<feature type="short sequence motif" description="Bipartite nuclear localization signal 1" evidence="1">
    <location>
        <begin position="62"/>
        <end position="65"/>
    </location>
</feature>
<feature type="short sequence motif" description="Bipartite nuclear localization signal 2" evidence="1">
    <location>
        <begin position="109"/>
        <end position="117"/>
    </location>
</feature>
<feature type="compositionally biased region" description="Low complexity" evidence="3">
    <location>
        <begin position="119"/>
        <end position="138"/>
    </location>
</feature>
<feature type="splice variant" id="VSP_018291" description="In isoform MYB59-1." evidence="6 7">
    <location>
        <begin position="1"/>
        <end position="65"/>
    </location>
</feature>
<feature type="splice variant" id="VSP_018292" description="In isoform MYB59-2." evidence="6">
    <original>KLVQEEYRKGPWTEQEDILLVNFVHLFGDRRWDFVAKVS</original>
    <variation>GFCSESFRFEGGGRNIRI</variation>
    <location>
        <begin position="2"/>
        <end position="40"/>
    </location>
</feature>
<feature type="splice variant" id="VSP_018293" description="In isoform MYB59-4." evidence="6">
    <location>
        <begin position="67"/>
        <end position="215"/>
    </location>
</feature>
<feature type="sequence conflict" description="In Ref. 1; AAC83616." evidence="8" ref="1">
    <original>S</original>
    <variation>T</variation>
    <location>
        <position position="138"/>
    </location>
</feature>
<feature type="sequence conflict" description="In Ref. 1; AAC83616." evidence="8" ref="1">
    <original>C</original>
    <variation>G</variation>
    <location>
        <position position="152"/>
    </location>
</feature>
<feature type="sequence conflict" description="In Ref. 1; AAC83616." evidence="8" ref="1">
    <original>AN</original>
    <variation>H</variation>
    <location>
        <begin position="171"/>
        <end position="172"/>
    </location>
</feature>
<comment type="function">
    <text evidence="8">Transcription factor.</text>
</comment>
<comment type="subcellular location">
    <subcellularLocation>
        <location evidence="2 5">Nucleus</location>
    </subcellularLocation>
    <text>Isoform MYB59-2 and isoform MYB59-3 (harboring both NLS1 and NLS2) are nuclear, werheas isoform MYB59-1 (harboring NLS2) and isoform MYB59-4 (harboring NLS1) are partially nuclear.</text>
</comment>
<comment type="alternative products">
    <event type="alternative splicing"/>
    <isoform>
        <id>Q4JL84-1</id>
        <name>MYB59-3</name>
        <sequence type="displayed"/>
    </isoform>
    <isoform>
        <id>Q4JL84-2</id>
        <name>MYB59-1</name>
        <sequence type="described" ref="VSP_018291"/>
    </isoform>
    <isoform>
        <id>Q4JL84-3</id>
        <name>MYB59-2</name>
        <sequence type="described" ref="VSP_018292"/>
    </isoform>
    <isoform>
        <id>Q4JL84-4</id>
        <name>MYB59-4</name>
        <sequence type="described" ref="VSP_018293"/>
    </isoform>
</comment>
<comment type="tissue specificity">
    <text evidence="5">Mainly expressed in leaves and seedlings, and to a lower extent, in roots, stems and inflorescences. Isoform MYB59-1 and isoform MYB59-2 are present in roots, leaves, and seedlings, while the expression of isoform MYB59-3 and isoform MYB59-4 is confined to seedlings.</text>
</comment>
<comment type="induction">
    <text evidence="4 5">Isoform MYB59-1 is induced by jasmonate (JA), salicylic acid (SA), gibberellic acid (GA), and ethylene. Also induced by cadmium (Cd).</text>
</comment>
<keyword id="KW-0025">Alternative splicing</keyword>
<keyword id="KW-0238">DNA-binding</keyword>
<keyword id="KW-0539">Nucleus</keyword>
<keyword id="KW-1185">Reference proteome</keyword>
<keyword id="KW-0677">Repeat</keyword>
<keyword id="KW-0804">Transcription</keyword>
<keyword id="KW-0805">Transcription regulation</keyword>
<name>MYB59_ARATH</name>
<sequence length="235" mass="27237">MKLVQEEYRKGPWTEQEDILLVNFVHLFGDRRWDFVAKVSGLNRTGKSCRLRWVNYLHPGLKRGKMTPQEERLVLELHAKWGNRWSKIARKLPGRTDNEIKNYWRTHMRKKAQEKKRPMSPTSSSSNCCSSSMTTTTSQDTGGSNGKMNQECEDGYYSMDDIWREIDQSGANVIKPVKDNYYSEQSCYLNFPPLASPTWESSLESIWNMDADESKMSSFAIDQFPLSFEHGSGRL</sequence>
<proteinExistence type="evidence at transcript level"/>
<accession>Q4JL84</accession>
<accession>O50069</accession>
<accession>Q0WPL8</accession>
<accession>Q4JL85</accession>
<accession>Q4JL86</accession>
<accession>Q7DLH5</accession>
<accession>Q9FN86</accession>
<protein>
    <recommendedName>
        <fullName>Transcription factor MYB59</fullName>
    </recommendedName>
    <alternativeName>
        <fullName>Myb-related protein 59</fullName>
        <shortName>AtMYB59</shortName>
    </alternativeName>
</protein>